<gene>
    <name type="primary">OPG051</name>
    <name type="ORF">C11L</name>
    <name type="ORF">F7L</name>
</gene>
<name>PG051_VARV</name>
<reference key="1">
    <citation type="journal article" date="1993" name="Nature">
        <title>Potential virulence determinants in terminal regions of variola smallpox virus genome.</title>
        <authorList>
            <person name="Massung R.F."/>
            <person name="Esposito J.J."/>
            <person name="Liu L.I."/>
            <person name="Qi J."/>
            <person name="Utterback T.R."/>
            <person name="Knight J.C."/>
            <person name="Aubin L."/>
            <person name="Yuran T.E."/>
            <person name="Parsons J.M."/>
            <person name="Loparev V.N."/>
            <person name="Selivanov N.A."/>
            <person name="Cavallaro K.F."/>
            <person name="Kerlavage A.R."/>
            <person name="Mahy B.W.J."/>
            <person name="Venter J.C."/>
        </authorList>
    </citation>
    <scope>NUCLEOTIDE SEQUENCE [GENOMIC DNA]</scope>
    <source>
        <strain>Bangladesh-1975</strain>
    </source>
</reference>
<reference key="2">
    <citation type="submission" date="1994-12" db="EMBL/GenBank/DDBJ databases">
        <authorList>
            <person name="Massung R.F."/>
            <person name="Loparev V.N."/>
            <person name="Knight J.C."/>
            <person name="Chizhikov V.E."/>
            <person name="Parsons J.M."/>
            <person name="Totmenin A.V."/>
            <person name="Shchelkunov S.N."/>
            <person name="Esposito J.J."/>
        </authorList>
    </citation>
    <scope>NUCLEOTIDE SEQUENCE [GENOMIC DNA]</scope>
    <source>
        <strain>Congo-1965</strain>
        <strain>Somalia-1977</strain>
    </source>
</reference>
<keyword id="KW-0244">Early protein</keyword>
<comment type="induction">
    <text evidence="1">Expressed in the early phase of the viral replicative cycle.</text>
</comment>
<comment type="similarity">
    <text evidence="2">Belongs to the orthopoxvirus OPG051 family.</text>
</comment>
<organismHost>
    <name type="scientific">Homo sapiens</name>
    <name type="common">Human</name>
    <dbReference type="NCBI Taxonomy" id="9606"/>
</organismHost>
<sequence>MTLVMGSCCGRFCDAKNKFKKDDIEEEGEGYCDYKNLNDLDEATRIEFGPLYIINEEKSDINTLDIKRRYRHAIESVYF</sequence>
<proteinExistence type="inferred from homology"/>
<protein>
    <recommendedName>
        <fullName>Protein OPG051</fullName>
    </recommendedName>
    <alternativeName>
        <fullName>Protein F7</fullName>
    </alternativeName>
</protein>
<organism>
    <name type="scientific">Variola virus</name>
    <dbReference type="NCBI Taxonomy" id="10255"/>
    <lineage>
        <taxon>Viruses</taxon>
        <taxon>Varidnaviria</taxon>
        <taxon>Bamfordvirae</taxon>
        <taxon>Nucleocytoviricota</taxon>
        <taxon>Pokkesviricetes</taxon>
        <taxon>Chitovirales</taxon>
        <taxon>Poxviridae</taxon>
        <taxon>Chordopoxvirinae</taxon>
        <taxon>Orthopoxvirus</taxon>
    </lineage>
</organism>
<dbReference type="EMBL" id="L22579">
    <property type="protein sequence ID" value="AAA60779.1"/>
    <property type="molecule type" value="Genomic_DNA"/>
</dbReference>
<dbReference type="EMBL" id="U18340">
    <property type="protein sequence ID" value="AAA69442.1"/>
    <property type="molecule type" value="Genomic_DNA"/>
</dbReference>
<dbReference type="EMBL" id="U18337">
    <property type="protein sequence ID" value="AAA69336.1"/>
    <property type="molecule type" value="Genomic_DNA"/>
</dbReference>
<dbReference type="PIR" id="T28469">
    <property type="entry name" value="T28469"/>
</dbReference>
<dbReference type="RefSeq" id="NP_042075.1">
    <property type="nucleotide sequence ID" value="NC_001611.1"/>
</dbReference>
<dbReference type="GeneID" id="1486567"/>
<dbReference type="KEGG" id="vg:1486567"/>
<dbReference type="Proteomes" id="UP000119805">
    <property type="component" value="Segment"/>
</dbReference>
<dbReference type="InterPro" id="IPR008725">
    <property type="entry name" value="Orthopox_F7"/>
</dbReference>
<dbReference type="Pfam" id="PF05813">
    <property type="entry name" value="Orthopox_F7"/>
    <property type="match status" value="1"/>
</dbReference>
<evidence type="ECO:0000250" key="1">
    <source>
        <dbReference type="UniProtKB" id="P24359"/>
    </source>
</evidence>
<evidence type="ECO:0000305" key="2"/>
<feature type="chain" id="PRO_0000448183" description="Protein OPG051">
    <location>
        <begin position="1"/>
        <end position="79"/>
    </location>
</feature>
<accession>P0DOQ2</accession>
<accession>P33867</accession>